<organism>
    <name type="scientific">Drosophila melanogaster</name>
    <name type="common">Fruit fly</name>
    <dbReference type="NCBI Taxonomy" id="7227"/>
    <lineage>
        <taxon>Eukaryota</taxon>
        <taxon>Metazoa</taxon>
        <taxon>Ecdysozoa</taxon>
        <taxon>Arthropoda</taxon>
        <taxon>Hexapoda</taxon>
        <taxon>Insecta</taxon>
        <taxon>Pterygota</taxon>
        <taxon>Neoptera</taxon>
        <taxon>Endopterygota</taxon>
        <taxon>Diptera</taxon>
        <taxon>Brachycera</taxon>
        <taxon>Muscomorpha</taxon>
        <taxon>Ephydroidea</taxon>
        <taxon>Drosophilidae</taxon>
        <taxon>Drosophila</taxon>
        <taxon>Sophophora</taxon>
    </lineage>
</organism>
<feature type="chain" id="PRO_0000048841" description="Brain-specific homeobox protein">
    <location>
        <begin position="1"/>
        <end position="429"/>
    </location>
</feature>
<feature type="DNA-binding region" description="Homeobox" evidence="2">
    <location>
        <begin position="274"/>
        <end position="333"/>
    </location>
</feature>
<feature type="region of interest" description="Disordered" evidence="3">
    <location>
        <begin position="1"/>
        <end position="27"/>
    </location>
</feature>
<feature type="region of interest" description="Disordered" evidence="3">
    <location>
        <begin position="59"/>
        <end position="204"/>
    </location>
</feature>
<feature type="region of interest" description="Disordered" evidence="3">
    <location>
        <begin position="326"/>
        <end position="429"/>
    </location>
</feature>
<feature type="compositionally biased region" description="Low complexity" evidence="3">
    <location>
        <begin position="17"/>
        <end position="27"/>
    </location>
</feature>
<feature type="compositionally biased region" description="Polar residues" evidence="3">
    <location>
        <begin position="69"/>
        <end position="84"/>
    </location>
</feature>
<feature type="compositionally biased region" description="Low complexity" evidence="3">
    <location>
        <begin position="105"/>
        <end position="132"/>
    </location>
</feature>
<feature type="compositionally biased region" description="Polar residues" evidence="3">
    <location>
        <begin position="158"/>
        <end position="170"/>
    </location>
</feature>
<feature type="compositionally biased region" description="Pro residues" evidence="3">
    <location>
        <begin position="177"/>
        <end position="192"/>
    </location>
</feature>
<feature type="compositionally biased region" description="Basic and acidic residues" evidence="3">
    <location>
        <begin position="335"/>
        <end position="350"/>
    </location>
</feature>
<feature type="compositionally biased region" description="Polar residues" evidence="3">
    <location>
        <begin position="376"/>
        <end position="388"/>
    </location>
</feature>
<feature type="compositionally biased region" description="Acidic residues" evidence="3">
    <location>
        <begin position="400"/>
        <end position="415"/>
    </location>
</feature>
<feature type="sequence conflict" description="In Ref. 4; AAB59219." evidence="5" ref="4">
    <original>T</original>
    <variation>P</variation>
    <location>
        <position position="301"/>
    </location>
</feature>
<name>BSH_DROME</name>
<sequence>MAMLNEASLSPADAHAHANATTPTHSKAAAMASATTMLTTKTPFSIEHILFQNLNSASNNNNSSDTNGIAANTNNYAPKSSRNAVKSARSAFAHDNNPHKHPSQHSHPPQSHPPASASASATATARSNQAASGYAGEDYGKSMHSTPRSNHHSRHGTSHYNGDQISQQLGSGAAQHPPVPTTQPQPPPPPPLNGGSGASNGVLYPNAPYTDHGFLQMTLGYLSPSSGTYKSVDPYFLSQASLFGGAPFFGAPGCVPELALGLGMGVNALRHCRRRKARTVFSDPQLSGLEKRFEGQRYLSTPERVELATALGLSETQVKTWFQNRRMKHKKQLRRRDNANEPVDFSRSEPGKQPGEATSSSGDSKHGKLNPGSVGGTPTQPTSEQQLQMCLMQQGYSTDDYSDLEADSGDEDNSSDVDIVGDAKLYQLT</sequence>
<protein>
    <recommendedName>
        <fullName>Brain-specific homeobox protein</fullName>
    </recommendedName>
</protein>
<reference key="1">
    <citation type="journal article" date="2000" name="Science">
        <title>The genome sequence of Drosophila melanogaster.</title>
        <authorList>
            <person name="Adams M.D."/>
            <person name="Celniker S.E."/>
            <person name="Holt R.A."/>
            <person name="Evans C.A."/>
            <person name="Gocayne J.D."/>
            <person name="Amanatides P.G."/>
            <person name="Scherer S.E."/>
            <person name="Li P.W."/>
            <person name="Hoskins R.A."/>
            <person name="Galle R.F."/>
            <person name="George R.A."/>
            <person name="Lewis S.E."/>
            <person name="Richards S."/>
            <person name="Ashburner M."/>
            <person name="Henderson S.N."/>
            <person name="Sutton G.G."/>
            <person name="Wortman J.R."/>
            <person name="Yandell M.D."/>
            <person name="Zhang Q."/>
            <person name="Chen L.X."/>
            <person name="Brandon R.C."/>
            <person name="Rogers Y.-H.C."/>
            <person name="Blazej R.G."/>
            <person name="Champe M."/>
            <person name="Pfeiffer B.D."/>
            <person name="Wan K.H."/>
            <person name="Doyle C."/>
            <person name="Baxter E.G."/>
            <person name="Helt G."/>
            <person name="Nelson C.R."/>
            <person name="Miklos G.L.G."/>
            <person name="Abril J.F."/>
            <person name="Agbayani A."/>
            <person name="An H.-J."/>
            <person name="Andrews-Pfannkoch C."/>
            <person name="Baldwin D."/>
            <person name="Ballew R.M."/>
            <person name="Basu A."/>
            <person name="Baxendale J."/>
            <person name="Bayraktaroglu L."/>
            <person name="Beasley E.M."/>
            <person name="Beeson K.Y."/>
            <person name="Benos P.V."/>
            <person name="Berman B.P."/>
            <person name="Bhandari D."/>
            <person name="Bolshakov S."/>
            <person name="Borkova D."/>
            <person name="Botchan M.R."/>
            <person name="Bouck J."/>
            <person name="Brokstein P."/>
            <person name="Brottier P."/>
            <person name="Burtis K.C."/>
            <person name="Busam D.A."/>
            <person name="Butler H."/>
            <person name="Cadieu E."/>
            <person name="Center A."/>
            <person name="Chandra I."/>
            <person name="Cherry J.M."/>
            <person name="Cawley S."/>
            <person name="Dahlke C."/>
            <person name="Davenport L.B."/>
            <person name="Davies P."/>
            <person name="de Pablos B."/>
            <person name="Delcher A."/>
            <person name="Deng Z."/>
            <person name="Mays A.D."/>
            <person name="Dew I."/>
            <person name="Dietz S.M."/>
            <person name="Dodson K."/>
            <person name="Doup L.E."/>
            <person name="Downes M."/>
            <person name="Dugan-Rocha S."/>
            <person name="Dunkov B.C."/>
            <person name="Dunn P."/>
            <person name="Durbin K.J."/>
            <person name="Evangelista C.C."/>
            <person name="Ferraz C."/>
            <person name="Ferriera S."/>
            <person name="Fleischmann W."/>
            <person name="Fosler C."/>
            <person name="Gabrielian A.E."/>
            <person name="Garg N.S."/>
            <person name="Gelbart W.M."/>
            <person name="Glasser K."/>
            <person name="Glodek A."/>
            <person name="Gong F."/>
            <person name="Gorrell J.H."/>
            <person name="Gu Z."/>
            <person name="Guan P."/>
            <person name="Harris M."/>
            <person name="Harris N.L."/>
            <person name="Harvey D.A."/>
            <person name="Heiman T.J."/>
            <person name="Hernandez J.R."/>
            <person name="Houck J."/>
            <person name="Hostin D."/>
            <person name="Houston K.A."/>
            <person name="Howland T.J."/>
            <person name="Wei M.-H."/>
            <person name="Ibegwam C."/>
            <person name="Jalali M."/>
            <person name="Kalush F."/>
            <person name="Karpen G.H."/>
            <person name="Ke Z."/>
            <person name="Kennison J.A."/>
            <person name="Ketchum K.A."/>
            <person name="Kimmel B.E."/>
            <person name="Kodira C.D."/>
            <person name="Kraft C.L."/>
            <person name="Kravitz S."/>
            <person name="Kulp D."/>
            <person name="Lai Z."/>
            <person name="Lasko P."/>
            <person name="Lei Y."/>
            <person name="Levitsky A.A."/>
            <person name="Li J.H."/>
            <person name="Li Z."/>
            <person name="Liang Y."/>
            <person name="Lin X."/>
            <person name="Liu X."/>
            <person name="Mattei B."/>
            <person name="McIntosh T.C."/>
            <person name="McLeod M.P."/>
            <person name="McPherson D."/>
            <person name="Merkulov G."/>
            <person name="Milshina N.V."/>
            <person name="Mobarry C."/>
            <person name="Morris J."/>
            <person name="Moshrefi A."/>
            <person name="Mount S.M."/>
            <person name="Moy M."/>
            <person name="Murphy B."/>
            <person name="Murphy L."/>
            <person name="Muzny D.M."/>
            <person name="Nelson D.L."/>
            <person name="Nelson D.R."/>
            <person name="Nelson K.A."/>
            <person name="Nixon K."/>
            <person name="Nusskern D.R."/>
            <person name="Pacleb J.M."/>
            <person name="Palazzolo M."/>
            <person name="Pittman G.S."/>
            <person name="Pan S."/>
            <person name="Pollard J."/>
            <person name="Puri V."/>
            <person name="Reese M.G."/>
            <person name="Reinert K."/>
            <person name="Remington K."/>
            <person name="Saunders R.D.C."/>
            <person name="Scheeler F."/>
            <person name="Shen H."/>
            <person name="Shue B.C."/>
            <person name="Siden-Kiamos I."/>
            <person name="Simpson M."/>
            <person name="Skupski M.P."/>
            <person name="Smith T.J."/>
            <person name="Spier E."/>
            <person name="Spradling A.C."/>
            <person name="Stapleton M."/>
            <person name="Strong R."/>
            <person name="Sun E."/>
            <person name="Svirskas R."/>
            <person name="Tector C."/>
            <person name="Turner R."/>
            <person name="Venter E."/>
            <person name="Wang A.H."/>
            <person name="Wang X."/>
            <person name="Wang Z.-Y."/>
            <person name="Wassarman D.A."/>
            <person name="Weinstock G.M."/>
            <person name="Weissenbach J."/>
            <person name="Williams S.M."/>
            <person name="Woodage T."/>
            <person name="Worley K.C."/>
            <person name="Wu D."/>
            <person name="Yang S."/>
            <person name="Yao Q.A."/>
            <person name="Ye J."/>
            <person name="Yeh R.-F."/>
            <person name="Zaveri J.S."/>
            <person name="Zhan M."/>
            <person name="Zhang G."/>
            <person name="Zhao Q."/>
            <person name="Zheng L."/>
            <person name="Zheng X.H."/>
            <person name="Zhong F.N."/>
            <person name="Zhong W."/>
            <person name="Zhou X."/>
            <person name="Zhu S.C."/>
            <person name="Zhu X."/>
            <person name="Smith H.O."/>
            <person name="Gibbs R.A."/>
            <person name="Myers E.W."/>
            <person name="Rubin G.M."/>
            <person name="Venter J.C."/>
        </authorList>
    </citation>
    <scope>NUCLEOTIDE SEQUENCE [LARGE SCALE GENOMIC DNA]</scope>
    <source>
        <strain>Berkeley</strain>
    </source>
</reference>
<reference key="2">
    <citation type="journal article" date="2002" name="Genome Biol.">
        <title>Annotation of the Drosophila melanogaster euchromatic genome: a systematic review.</title>
        <authorList>
            <person name="Misra S."/>
            <person name="Crosby M.A."/>
            <person name="Mungall C.J."/>
            <person name="Matthews B.B."/>
            <person name="Campbell K.S."/>
            <person name="Hradecky P."/>
            <person name="Huang Y."/>
            <person name="Kaminker J.S."/>
            <person name="Millburn G.H."/>
            <person name="Prochnik S.E."/>
            <person name="Smith C.D."/>
            <person name="Tupy J.L."/>
            <person name="Whitfield E.J."/>
            <person name="Bayraktaroglu L."/>
            <person name="Berman B.P."/>
            <person name="Bettencourt B.R."/>
            <person name="Celniker S.E."/>
            <person name="de Grey A.D.N.J."/>
            <person name="Drysdale R.A."/>
            <person name="Harris N.L."/>
            <person name="Richter J."/>
            <person name="Russo S."/>
            <person name="Schroeder A.J."/>
            <person name="Shu S.Q."/>
            <person name="Stapleton M."/>
            <person name="Yamada C."/>
            <person name="Ashburner M."/>
            <person name="Gelbart W.M."/>
            <person name="Rubin G.M."/>
            <person name="Lewis S.E."/>
        </authorList>
    </citation>
    <scope>GENOME REANNOTATION</scope>
    <source>
        <strain>Berkeley</strain>
    </source>
</reference>
<reference key="3">
    <citation type="submission" date="2005-09" db="EMBL/GenBank/DDBJ databases">
        <authorList>
            <person name="Stapleton M."/>
            <person name="Carlson J.W."/>
            <person name="Chavez C."/>
            <person name="Frise E."/>
            <person name="George R.A."/>
            <person name="Pacleb J.M."/>
            <person name="Park S."/>
            <person name="Wan K.H."/>
            <person name="Yu C."/>
            <person name="Celniker S.E."/>
        </authorList>
    </citation>
    <scope>NUCLEOTIDE SEQUENCE [LARGE SCALE MRNA]</scope>
    <source>
        <strain>Berkeley</strain>
    </source>
</reference>
<reference key="4">
    <citation type="journal article" date="1993" name="Development">
        <title>A new Drosophila homeobox gene, bsh, is expressed in a subset of brain cells during embryogenesis.</title>
        <authorList>
            <person name="Jones B."/>
            <person name="McGinnis W."/>
        </authorList>
    </citation>
    <scope>NUCLEOTIDE SEQUENCE [GENOMIC DNA] OF 69-429</scope>
    <scope>FUNCTION</scope>
    <scope>TISSUE SPECIFICITY</scope>
    <scope>DEVELOPMENTAL STAGE</scope>
    <source>
        <strain>Oregon-R</strain>
    </source>
</reference>
<proteinExistence type="evidence at transcript level"/>
<gene>
    <name type="primary">bsh</name>
    <name type="ORF">CG10604</name>
</gene>
<evidence type="ECO:0000250" key="1"/>
<evidence type="ECO:0000255" key="2">
    <source>
        <dbReference type="PROSITE-ProRule" id="PRU00108"/>
    </source>
</evidence>
<evidence type="ECO:0000256" key="3">
    <source>
        <dbReference type="SAM" id="MobiDB-lite"/>
    </source>
</evidence>
<evidence type="ECO:0000269" key="4">
    <source>
    </source>
</evidence>
<evidence type="ECO:0000305" key="5"/>
<dbReference type="EMBL" id="AE014134">
    <property type="protein sequence ID" value="AAF53843.3"/>
    <property type="molecule type" value="Genomic_DNA"/>
</dbReference>
<dbReference type="EMBL" id="AE014134">
    <property type="protein sequence ID" value="AAS64721.2"/>
    <property type="molecule type" value="Genomic_DNA"/>
</dbReference>
<dbReference type="EMBL" id="BT022203">
    <property type="protein sequence ID" value="AAY51597.1"/>
    <property type="molecule type" value="mRNA"/>
</dbReference>
<dbReference type="EMBL" id="L06475">
    <property type="protein sequence ID" value="AAB59219.1"/>
    <property type="status" value="ALT_FRAME"/>
    <property type="molecule type" value="Genomic_DNA"/>
</dbReference>
<dbReference type="RefSeq" id="NP_477350.2">
    <property type="nucleotide sequence ID" value="NM_058002.3"/>
</dbReference>
<dbReference type="RefSeq" id="NP_995728.2">
    <property type="nucleotide sequence ID" value="NM_206006.2"/>
</dbReference>
<dbReference type="SMR" id="Q04787"/>
<dbReference type="BioGRID" id="61242">
    <property type="interactions" value="31"/>
</dbReference>
<dbReference type="DIP" id="DIP-17210N"/>
<dbReference type="FunCoup" id="Q04787">
    <property type="interactions" value="23"/>
</dbReference>
<dbReference type="IntAct" id="Q04787">
    <property type="interactions" value="7"/>
</dbReference>
<dbReference type="STRING" id="7227.FBpp0088920"/>
<dbReference type="GlyGen" id="Q04787">
    <property type="glycosylation" value="1 site"/>
</dbReference>
<dbReference type="PaxDb" id="7227-FBpp0088920"/>
<dbReference type="DNASU" id="35266"/>
<dbReference type="EnsemblMetazoa" id="FBtr0089320">
    <property type="protein sequence ID" value="FBpp0088920"/>
    <property type="gene ID" value="FBgn0000529"/>
</dbReference>
<dbReference type="EnsemblMetazoa" id="FBtr0343855">
    <property type="protein sequence ID" value="FBpp0310398"/>
    <property type="gene ID" value="FBgn0000529"/>
</dbReference>
<dbReference type="GeneID" id="35266"/>
<dbReference type="KEGG" id="dme:Dmel_CG10604"/>
<dbReference type="AGR" id="FB:FBgn0000529"/>
<dbReference type="CTD" id="35266"/>
<dbReference type="FlyBase" id="FBgn0000529">
    <property type="gene designation" value="bsh"/>
</dbReference>
<dbReference type="VEuPathDB" id="VectorBase:FBgn0000529"/>
<dbReference type="eggNOG" id="KOG0491">
    <property type="taxonomic scope" value="Eukaryota"/>
</dbReference>
<dbReference type="GeneTree" id="ENSGT00940000165097"/>
<dbReference type="HOGENOM" id="CLU_049799_0_0_1"/>
<dbReference type="InParanoid" id="Q04787"/>
<dbReference type="OMA" id="CFLQHGY"/>
<dbReference type="OrthoDB" id="6159439at2759"/>
<dbReference type="PhylomeDB" id="Q04787"/>
<dbReference type="Reactome" id="R-DME-8853884">
    <property type="pathway name" value="Transcriptional Regulation by VENTX"/>
</dbReference>
<dbReference type="SignaLink" id="Q04787"/>
<dbReference type="BioGRID-ORCS" id="35266">
    <property type="hits" value="0 hits in 1 CRISPR screen"/>
</dbReference>
<dbReference type="GenomeRNAi" id="35266"/>
<dbReference type="PRO" id="PR:Q04787"/>
<dbReference type="Proteomes" id="UP000000803">
    <property type="component" value="Chromosome 2L"/>
</dbReference>
<dbReference type="Bgee" id="FBgn0000529">
    <property type="expression patterns" value="Expressed in medullary intrinsic neuron Mi1 (Drosophila) in insect head and 11 other cell types or tissues"/>
</dbReference>
<dbReference type="GO" id="GO:0005634">
    <property type="term" value="C:nucleus"/>
    <property type="evidence" value="ECO:0000314"/>
    <property type="project" value="FlyBase"/>
</dbReference>
<dbReference type="GO" id="GO:0003700">
    <property type="term" value="F:DNA-binding transcription factor activity"/>
    <property type="evidence" value="ECO:0000303"/>
    <property type="project" value="UniProtKB"/>
</dbReference>
<dbReference type="GO" id="GO:0000981">
    <property type="term" value="F:DNA-binding transcription factor activity, RNA polymerase II-specific"/>
    <property type="evidence" value="ECO:0000318"/>
    <property type="project" value="GO_Central"/>
</dbReference>
<dbReference type="GO" id="GO:0000978">
    <property type="term" value="F:RNA polymerase II cis-regulatory region sequence-specific DNA binding"/>
    <property type="evidence" value="ECO:0000318"/>
    <property type="project" value="GO_Central"/>
</dbReference>
<dbReference type="GO" id="GO:0007420">
    <property type="term" value="P:brain development"/>
    <property type="evidence" value="ECO:0000315"/>
    <property type="project" value="UniProtKB"/>
</dbReference>
<dbReference type="GO" id="GO:0030154">
    <property type="term" value="P:cell differentiation"/>
    <property type="evidence" value="ECO:0000318"/>
    <property type="project" value="GO_Central"/>
</dbReference>
<dbReference type="GO" id="GO:0048663">
    <property type="term" value="P:neuron fate commitment"/>
    <property type="evidence" value="ECO:0000315"/>
    <property type="project" value="FlyBase"/>
</dbReference>
<dbReference type="GO" id="GO:0006355">
    <property type="term" value="P:regulation of DNA-templated transcription"/>
    <property type="evidence" value="ECO:0000303"/>
    <property type="project" value="UniProtKB"/>
</dbReference>
<dbReference type="GO" id="GO:0006357">
    <property type="term" value="P:regulation of transcription by RNA polymerase II"/>
    <property type="evidence" value="ECO:0000318"/>
    <property type="project" value="GO_Central"/>
</dbReference>
<dbReference type="CDD" id="cd00086">
    <property type="entry name" value="homeodomain"/>
    <property type="match status" value="1"/>
</dbReference>
<dbReference type="FunFam" id="1.10.10.60:FF:000373">
    <property type="entry name" value="Blast:Brain-specific homeobox protein"/>
    <property type="match status" value="1"/>
</dbReference>
<dbReference type="Gene3D" id="1.10.10.60">
    <property type="entry name" value="Homeodomain-like"/>
    <property type="match status" value="1"/>
</dbReference>
<dbReference type="InterPro" id="IPR001356">
    <property type="entry name" value="HD"/>
</dbReference>
<dbReference type="InterPro" id="IPR020479">
    <property type="entry name" value="HD_metazoa"/>
</dbReference>
<dbReference type="InterPro" id="IPR017970">
    <property type="entry name" value="Homeobox_CS"/>
</dbReference>
<dbReference type="InterPro" id="IPR050848">
    <property type="entry name" value="Homeobox_TF"/>
</dbReference>
<dbReference type="InterPro" id="IPR009057">
    <property type="entry name" value="Homeodomain-like_sf"/>
</dbReference>
<dbReference type="InterPro" id="IPR000047">
    <property type="entry name" value="HTH_motif"/>
</dbReference>
<dbReference type="PANTHER" id="PTHR24333">
    <property type="entry name" value="HOMEO BOX HB9 LIKE A-RELATED"/>
    <property type="match status" value="1"/>
</dbReference>
<dbReference type="PANTHER" id="PTHR24333:SF8">
    <property type="entry name" value="HOMEOBOX PROTEIN CEH-62"/>
    <property type="match status" value="1"/>
</dbReference>
<dbReference type="Pfam" id="PF00046">
    <property type="entry name" value="Homeodomain"/>
    <property type="match status" value="1"/>
</dbReference>
<dbReference type="PRINTS" id="PR00024">
    <property type="entry name" value="HOMEOBOX"/>
</dbReference>
<dbReference type="PRINTS" id="PR00031">
    <property type="entry name" value="HTHREPRESSR"/>
</dbReference>
<dbReference type="SMART" id="SM00389">
    <property type="entry name" value="HOX"/>
    <property type="match status" value="1"/>
</dbReference>
<dbReference type="SUPFAM" id="SSF46689">
    <property type="entry name" value="Homeodomain-like"/>
    <property type="match status" value="1"/>
</dbReference>
<dbReference type="PROSITE" id="PS00027">
    <property type="entry name" value="HOMEOBOX_1"/>
    <property type="match status" value="1"/>
</dbReference>
<dbReference type="PROSITE" id="PS50071">
    <property type="entry name" value="HOMEOBOX_2"/>
    <property type="match status" value="1"/>
</dbReference>
<comment type="function">
    <text evidence="1 4">DNA binding protein that function as transcriptional activator (By similarity). May play a role in the determination and function of cell types in the brain.</text>
</comment>
<comment type="subcellular location">
    <subcellularLocation>
        <location>Nucleus</location>
    </subcellularLocation>
</comment>
<comment type="tissue specificity">
    <text evidence="4">Embryonic brain; accumulates in approximately 30 cells in each brain hemisphere. One of these cells is closely associated with the terminus of the larval visual nerve (Bolwig's nerve).</text>
</comment>
<comment type="developmental stage">
    <text evidence="4">Expressed during embryogenesis with very low levels found in the larva and adult.</text>
</comment>
<comment type="similarity">
    <text evidence="5">Belongs to the distal-less homeobox family.</text>
</comment>
<comment type="sequence caution" evidence="5">
    <conflict type="frameshift">
        <sequence resource="EMBL-CDS" id="AAB59219"/>
    </conflict>
</comment>
<keyword id="KW-0010">Activator</keyword>
<keyword id="KW-0217">Developmental protein</keyword>
<keyword id="KW-0238">DNA-binding</keyword>
<keyword id="KW-0371">Homeobox</keyword>
<keyword id="KW-0539">Nucleus</keyword>
<keyword id="KW-1185">Reference proteome</keyword>
<keyword id="KW-0804">Transcription</keyword>
<keyword id="KW-0805">Transcription regulation</keyword>
<accession>Q04787</accession>
<accession>Q4V6V3</accession>
<accession>Q7KT32</accession>
<accession>Q9VIS2</accession>